<gene>
    <name evidence="1" type="primary">gltX2</name>
    <name type="ordered locus">Plav_3180</name>
</gene>
<evidence type="ECO:0000255" key="1">
    <source>
        <dbReference type="HAMAP-Rule" id="MF_00022"/>
    </source>
</evidence>
<comment type="function">
    <text evidence="1">Catalyzes the attachment of glutamate to tRNA(Glu) in a two-step reaction: glutamate is first activated by ATP to form Glu-AMP and then transferred to the acceptor end of tRNA(Glu).</text>
</comment>
<comment type="catalytic activity">
    <reaction evidence="1">
        <text>tRNA(Glu) + L-glutamate + ATP = L-glutamyl-tRNA(Glu) + AMP + diphosphate</text>
        <dbReference type="Rhea" id="RHEA:23540"/>
        <dbReference type="Rhea" id="RHEA-COMP:9663"/>
        <dbReference type="Rhea" id="RHEA-COMP:9680"/>
        <dbReference type="ChEBI" id="CHEBI:29985"/>
        <dbReference type="ChEBI" id="CHEBI:30616"/>
        <dbReference type="ChEBI" id="CHEBI:33019"/>
        <dbReference type="ChEBI" id="CHEBI:78442"/>
        <dbReference type="ChEBI" id="CHEBI:78520"/>
        <dbReference type="ChEBI" id="CHEBI:456215"/>
        <dbReference type="EC" id="6.1.1.17"/>
    </reaction>
</comment>
<comment type="subunit">
    <text evidence="1">Monomer.</text>
</comment>
<comment type="subcellular location">
    <subcellularLocation>
        <location evidence="1">Cytoplasm</location>
    </subcellularLocation>
</comment>
<comment type="similarity">
    <text evidence="1">Belongs to the class-I aminoacyl-tRNA synthetase family. Glutamate--tRNA ligase type 1 subfamily.</text>
</comment>
<feature type="chain" id="PRO_0000367733" description="Glutamate--tRNA ligase 2">
    <location>
        <begin position="1"/>
        <end position="490"/>
    </location>
</feature>
<feature type="short sequence motif" description="'HIGH' region" evidence="1">
    <location>
        <begin position="33"/>
        <end position="43"/>
    </location>
</feature>
<feature type="short sequence motif" description="'KMSKS' region" evidence="1">
    <location>
        <begin position="262"/>
        <end position="266"/>
    </location>
</feature>
<feature type="binding site" evidence="1">
    <location>
        <position position="265"/>
    </location>
    <ligand>
        <name>ATP</name>
        <dbReference type="ChEBI" id="CHEBI:30616"/>
    </ligand>
</feature>
<protein>
    <recommendedName>
        <fullName evidence="1">Glutamate--tRNA ligase 2</fullName>
        <ecNumber evidence="1">6.1.1.17</ecNumber>
    </recommendedName>
    <alternativeName>
        <fullName evidence="1">Glutamyl-tRNA synthetase 2</fullName>
        <shortName evidence="1">GluRS 2</shortName>
    </alternativeName>
</protein>
<organism>
    <name type="scientific">Parvibaculum lavamentivorans (strain DS-1 / DSM 13023 / NCIMB 13966)</name>
    <dbReference type="NCBI Taxonomy" id="402881"/>
    <lineage>
        <taxon>Bacteria</taxon>
        <taxon>Pseudomonadati</taxon>
        <taxon>Pseudomonadota</taxon>
        <taxon>Alphaproteobacteria</taxon>
        <taxon>Hyphomicrobiales</taxon>
        <taxon>Parvibaculaceae</taxon>
        <taxon>Parvibaculum</taxon>
    </lineage>
</organism>
<keyword id="KW-0030">Aminoacyl-tRNA synthetase</keyword>
<keyword id="KW-0067">ATP-binding</keyword>
<keyword id="KW-0963">Cytoplasm</keyword>
<keyword id="KW-0436">Ligase</keyword>
<keyword id="KW-0547">Nucleotide-binding</keyword>
<keyword id="KW-0648">Protein biosynthesis</keyword>
<keyword id="KW-1185">Reference proteome</keyword>
<sequence length="490" mass="55041">MPTFSLVAYPRGCGAGSQEIMTEKKTVITRFAPSPTGYLHIGGARTALFNWLFARHHGGQFLLRIEDTDRERSTTPAIDAIFEGLQWLGLSWDAEPVFQASRAARHVEAVQELLDRGKAYHCYASQQELEEMREKARAEGRPIHYDGRWRDRDPAEAPAGVRPVVRFRSPNDGETIVRDHVMGDVRFPNEQLDDLILLRSDGTPTYNLSVVVDDHDMSITHIIRGDDHLTNAARQSQIYEALGWEVPEFAHVPLIHGPDGAKLSKRHGALGAEAYRDLGYLPEAMRNYLVRLGWSHGDDELFSTEQAIEWFNLESIGRSPARFDFAKLENLNGHYIREADDERLADETIALMTRNEGWKTDDEFRKKLIALMPGLKERAKTLVEIGKGAAFLLVHRPLTCDDKALQLLNPEARALLARLVSRLEARNDWILSEIETTVRAFAEEENLKLGKVAQPLRAAVTGSTVSPPIFDVLATLGRDEALGRIKDQAA</sequence>
<accession>A7HY03</accession>
<proteinExistence type="inferred from homology"/>
<name>SYE2_PARL1</name>
<reference key="1">
    <citation type="journal article" date="2011" name="Stand. Genomic Sci.">
        <title>Complete genome sequence of Parvibaculum lavamentivorans type strain (DS-1(T)).</title>
        <authorList>
            <person name="Schleheck D."/>
            <person name="Weiss M."/>
            <person name="Pitluck S."/>
            <person name="Bruce D."/>
            <person name="Land M.L."/>
            <person name="Han S."/>
            <person name="Saunders E."/>
            <person name="Tapia R."/>
            <person name="Detter C."/>
            <person name="Brettin T."/>
            <person name="Han J."/>
            <person name="Woyke T."/>
            <person name="Goodwin L."/>
            <person name="Pennacchio L."/>
            <person name="Nolan M."/>
            <person name="Cook A.M."/>
            <person name="Kjelleberg S."/>
            <person name="Thomas T."/>
        </authorList>
    </citation>
    <scope>NUCLEOTIDE SEQUENCE [LARGE SCALE GENOMIC DNA]</scope>
    <source>
        <strain>DS-1 / DSM 13023 / NCIMB 13966</strain>
    </source>
</reference>
<dbReference type="EC" id="6.1.1.17" evidence="1"/>
<dbReference type="EMBL" id="CP000774">
    <property type="protein sequence ID" value="ABS64786.1"/>
    <property type="molecule type" value="Genomic_DNA"/>
</dbReference>
<dbReference type="SMR" id="A7HY03"/>
<dbReference type="STRING" id="402881.Plav_3180"/>
<dbReference type="KEGG" id="pla:Plav_3180"/>
<dbReference type="eggNOG" id="COG0008">
    <property type="taxonomic scope" value="Bacteria"/>
</dbReference>
<dbReference type="HOGENOM" id="CLU_015768_6_0_5"/>
<dbReference type="Proteomes" id="UP000006377">
    <property type="component" value="Chromosome"/>
</dbReference>
<dbReference type="GO" id="GO:0005829">
    <property type="term" value="C:cytosol"/>
    <property type="evidence" value="ECO:0007669"/>
    <property type="project" value="TreeGrafter"/>
</dbReference>
<dbReference type="GO" id="GO:0005524">
    <property type="term" value="F:ATP binding"/>
    <property type="evidence" value="ECO:0007669"/>
    <property type="project" value="UniProtKB-UniRule"/>
</dbReference>
<dbReference type="GO" id="GO:0004818">
    <property type="term" value="F:glutamate-tRNA ligase activity"/>
    <property type="evidence" value="ECO:0007669"/>
    <property type="project" value="UniProtKB-UniRule"/>
</dbReference>
<dbReference type="GO" id="GO:0000049">
    <property type="term" value="F:tRNA binding"/>
    <property type="evidence" value="ECO:0007669"/>
    <property type="project" value="InterPro"/>
</dbReference>
<dbReference type="GO" id="GO:0008270">
    <property type="term" value="F:zinc ion binding"/>
    <property type="evidence" value="ECO:0007669"/>
    <property type="project" value="InterPro"/>
</dbReference>
<dbReference type="GO" id="GO:0006424">
    <property type="term" value="P:glutamyl-tRNA aminoacylation"/>
    <property type="evidence" value="ECO:0007669"/>
    <property type="project" value="UniProtKB-UniRule"/>
</dbReference>
<dbReference type="CDD" id="cd00808">
    <property type="entry name" value="GluRS_core"/>
    <property type="match status" value="1"/>
</dbReference>
<dbReference type="FunFam" id="3.40.50.620:FF:000007">
    <property type="entry name" value="Glutamate--tRNA ligase"/>
    <property type="match status" value="1"/>
</dbReference>
<dbReference type="Gene3D" id="1.10.10.350">
    <property type="match status" value="1"/>
</dbReference>
<dbReference type="Gene3D" id="3.40.50.620">
    <property type="entry name" value="HUPs"/>
    <property type="match status" value="1"/>
</dbReference>
<dbReference type="HAMAP" id="MF_00022">
    <property type="entry name" value="Glu_tRNA_synth_type1"/>
    <property type="match status" value="1"/>
</dbReference>
<dbReference type="InterPro" id="IPR045462">
    <property type="entry name" value="aa-tRNA-synth_I_cd-bd"/>
</dbReference>
<dbReference type="InterPro" id="IPR020751">
    <property type="entry name" value="aa-tRNA-synth_I_codon-bd_sub2"/>
</dbReference>
<dbReference type="InterPro" id="IPR001412">
    <property type="entry name" value="aa-tRNA-synth_I_CS"/>
</dbReference>
<dbReference type="InterPro" id="IPR008925">
    <property type="entry name" value="aa_tRNA-synth_I_cd-bd_sf"/>
</dbReference>
<dbReference type="InterPro" id="IPR004527">
    <property type="entry name" value="Glu-tRNA-ligase_bac/mito"/>
</dbReference>
<dbReference type="InterPro" id="IPR000924">
    <property type="entry name" value="Glu/Gln-tRNA-synth"/>
</dbReference>
<dbReference type="InterPro" id="IPR020058">
    <property type="entry name" value="Glu/Gln-tRNA-synth_Ib_cat-dom"/>
</dbReference>
<dbReference type="InterPro" id="IPR049940">
    <property type="entry name" value="GluQ/Sye"/>
</dbReference>
<dbReference type="InterPro" id="IPR033910">
    <property type="entry name" value="GluRS_core"/>
</dbReference>
<dbReference type="InterPro" id="IPR014729">
    <property type="entry name" value="Rossmann-like_a/b/a_fold"/>
</dbReference>
<dbReference type="NCBIfam" id="TIGR00464">
    <property type="entry name" value="gltX_bact"/>
    <property type="match status" value="1"/>
</dbReference>
<dbReference type="PANTHER" id="PTHR43311">
    <property type="entry name" value="GLUTAMATE--TRNA LIGASE"/>
    <property type="match status" value="1"/>
</dbReference>
<dbReference type="PANTHER" id="PTHR43311:SF2">
    <property type="entry name" value="GLUTAMATE--TRNA LIGASE, MITOCHONDRIAL-RELATED"/>
    <property type="match status" value="1"/>
</dbReference>
<dbReference type="Pfam" id="PF19269">
    <property type="entry name" value="Anticodon_2"/>
    <property type="match status" value="1"/>
</dbReference>
<dbReference type="Pfam" id="PF00749">
    <property type="entry name" value="tRNA-synt_1c"/>
    <property type="match status" value="1"/>
</dbReference>
<dbReference type="PRINTS" id="PR00987">
    <property type="entry name" value="TRNASYNTHGLU"/>
</dbReference>
<dbReference type="SUPFAM" id="SSF48163">
    <property type="entry name" value="An anticodon-binding domain of class I aminoacyl-tRNA synthetases"/>
    <property type="match status" value="1"/>
</dbReference>
<dbReference type="SUPFAM" id="SSF52374">
    <property type="entry name" value="Nucleotidylyl transferase"/>
    <property type="match status" value="1"/>
</dbReference>
<dbReference type="PROSITE" id="PS00178">
    <property type="entry name" value="AA_TRNA_LIGASE_I"/>
    <property type="match status" value="1"/>
</dbReference>